<organism>
    <name type="scientific">Pan troglodytes</name>
    <name type="common">Chimpanzee</name>
    <dbReference type="NCBI Taxonomy" id="9598"/>
    <lineage>
        <taxon>Eukaryota</taxon>
        <taxon>Metazoa</taxon>
        <taxon>Chordata</taxon>
        <taxon>Craniata</taxon>
        <taxon>Vertebrata</taxon>
        <taxon>Euteleostomi</taxon>
        <taxon>Mammalia</taxon>
        <taxon>Eutheria</taxon>
        <taxon>Euarchontoglires</taxon>
        <taxon>Primates</taxon>
        <taxon>Haplorrhini</taxon>
        <taxon>Catarrhini</taxon>
        <taxon>Hominidae</taxon>
        <taxon>Pan</taxon>
    </lineage>
</organism>
<sequence>MRTFLFLFAVLFFLTPAKNAFFDEKCNKLKGTCKNNCGKNEELIALCQKSLKCCRTIQPCGSIID</sequence>
<dbReference type="EMBL" id="DQ012059">
    <property type="protein sequence ID" value="AAY59791.1"/>
    <property type="molecule type" value="mRNA"/>
</dbReference>
<dbReference type="EMBL" id="AM410115">
    <property type="protein sequence ID" value="CAL68930.1"/>
    <property type="molecule type" value="Genomic_DNA"/>
</dbReference>
<dbReference type="EMBL" id="AY831738">
    <property type="protein sequence ID" value="AAW32919.1"/>
    <property type="molecule type" value="Genomic_DNA"/>
</dbReference>
<dbReference type="RefSeq" id="NP_001123228.1">
    <property type="nucleotide sequence ID" value="NM_001129756.1"/>
</dbReference>
<dbReference type="SMR" id="Q5IAB3"/>
<dbReference type="FunCoup" id="Q5IAB3">
    <property type="interactions" value="2"/>
</dbReference>
<dbReference type="STRING" id="9598.ENSPTRP00000034194"/>
<dbReference type="PaxDb" id="9598-ENSPTRP00000034194"/>
<dbReference type="Ensembl" id="ENSPTRT00000037000.3">
    <property type="protein sequence ID" value="ENSPTRP00000034194.2"/>
    <property type="gene ID" value="ENSPTRG00000019961.3"/>
</dbReference>
<dbReference type="GeneID" id="735983"/>
<dbReference type="KEGG" id="ptr:735983"/>
<dbReference type="CTD" id="245909"/>
<dbReference type="eggNOG" id="ENOG502TF62">
    <property type="taxonomic scope" value="Eukaryota"/>
</dbReference>
<dbReference type="GeneTree" id="ENSGT00390000005938"/>
<dbReference type="HOGENOM" id="CLU_187814_0_0_1"/>
<dbReference type="InParanoid" id="Q5IAB3"/>
<dbReference type="OMA" id="RGTCKNN"/>
<dbReference type="OrthoDB" id="11188at9604"/>
<dbReference type="Proteomes" id="UP000002277">
    <property type="component" value="Unplaced"/>
</dbReference>
<dbReference type="Bgee" id="ENSPTRG00000019961">
    <property type="expression patterns" value="Expressed in prefrontal cortex and 1 other cell type or tissue"/>
</dbReference>
<dbReference type="GO" id="GO:0005576">
    <property type="term" value="C:extracellular region"/>
    <property type="evidence" value="ECO:0007669"/>
    <property type="project" value="UniProtKB-SubCell"/>
</dbReference>
<dbReference type="GO" id="GO:0016020">
    <property type="term" value="C:membrane"/>
    <property type="evidence" value="ECO:0007669"/>
    <property type="project" value="UniProtKB-SubCell"/>
</dbReference>
<dbReference type="GO" id="GO:0042742">
    <property type="term" value="P:defense response to bacterium"/>
    <property type="evidence" value="ECO:0007669"/>
    <property type="project" value="UniProtKB-KW"/>
</dbReference>
<dbReference type="GO" id="GO:0045087">
    <property type="term" value="P:innate immune response"/>
    <property type="evidence" value="ECO:0007669"/>
    <property type="project" value="InterPro"/>
</dbReference>
<dbReference type="FunFam" id="3.10.360.10:FF:000002">
    <property type="entry name" value="Beta-defensin 106A"/>
    <property type="match status" value="1"/>
</dbReference>
<dbReference type="Gene3D" id="3.10.360.10">
    <property type="entry name" value="Antimicrobial Peptide, Beta-defensin 2, Chain A"/>
    <property type="match status" value="1"/>
</dbReference>
<dbReference type="InterPro" id="IPR025933">
    <property type="entry name" value="Beta_defensin_dom"/>
</dbReference>
<dbReference type="Pfam" id="PF13841">
    <property type="entry name" value="Defensin_beta_2"/>
    <property type="match status" value="1"/>
</dbReference>
<accession>Q5IAB3</accession>
<accession>A4H210</accession>
<accession>Q30KL9</accession>
<proteinExistence type="inferred from homology"/>
<keyword id="KW-0044">Antibiotic</keyword>
<keyword id="KW-0929">Antimicrobial</keyword>
<keyword id="KW-0211">Defensin</keyword>
<keyword id="KW-1015">Disulfide bond</keyword>
<keyword id="KW-0472">Membrane</keyword>
<keyword id="KW-1185">Reference proteome</keyword>
<keyword id="KW-0964">Secreted</keyword>
<keyword id="KW-0732">Signal</keyword>
<name>D106A_PANTR</name>
<evidence type="ECO:0000250" key="1"/>
<evidence type="ECO:0000250" key="2">
    <source>
        <dbReference type="UniProtKB" id="Q8N104"/>
    </source>
</evidence>
<evidence type="ECO:0000305" key="3"/>
<protein>
    <recommendedName>
        <fullName>Beta-defensin 106A</fullName>
    </recommendedName>
    <alternativeName>
        <fullName>Beta-defensin 6</fullName>
        <shortName>BD-6</shortName>
        <shortName>DEFB-6</shortName>
        <shortName>cBD-6</shortName>
    </alternativeName>
    <alternativeName>
        <fullName>Defensin, beta 106</fullName>
    </alternativeName>
    <alternativeName>
        <fullName>Defensin, beta 106A</fullName>
    </alternativeName>
</protein>
<comment type="function">
    <text evidence="2">Has antibacterial activity. Acts as a ligand for C-C chemokine receptor CCR2.</text>
</comment>
<comment type="subunit">
    <text evidence="2">Monomer. Interacts with CCR2 (via extracellular N-terminal region); this interaction may preferentially require specific tyrosine sulfation on CCR2.</text>
</comment>
<comment type="subcellular location">
    <subcellularLocation>
        <location evidence="2">Secreted</location>
    </subcellularLocation>
    <subcellularLocation>
        <location evidence="2">Membrane</location>
    </subcellularLocation>
    <text evidence="2">Associates with tumor cell membrane-derived microvesicles.</text>
</comment>
<comment type="similarity">
    <text evidence="3">Belongs to the beta-defensin family.</text>
</comment>
<reference key="1">
    <citation type="journal article" date="2005" name="Physiol. Genomics">
        <title>Cross-species analysis of the mammalian beta-defensin gene family: presence of syntenic gene clusters and preferential expression in the male reproductive tract.</title>
        <authorList>
            <person name="Patil A.A."/>
            <person name="Cai Y."/>
            <person name="Sang Y."/>
            <person name="Blecha F."/>
            <person name="Zhang G."/>
        </authorList>
    </citation>
    <scope>NUCLEOTIDE SEQUENCE [MRNA]</scope>
</reference>
<reference key="2">
    <citation type="submission" date="2006-11" db="EMBL/GenBank/DDBJ databases">
        <title>Evolution and sequence variation of human beta-defensin genes.</title>
        <authorList>
            <person name="Hollox E.J."/>
            <person name="Armour J.A.L."/>
        </authorList>
    </citation>
    <scope>NUCLEOTIDE SEQUENCE [GENOMIC DNA]</scope>
</reference>
<reference key="3">
    <citation type="journal article" date="2005" name="BMC Evol. Biol.">
        <title>The complexity of selection at the major primate beta-defensin locus.</title>
        <authorList>
            <person name="Semple C.A.M."/>
            <person name="Maxwell A."/>
            <person name="Gautier P."/>
            <person name="Kilanowski F.M."/>
            <person name="Eastwood H."/>
            <person name="Barran P.E."/>
            <person name="Dorin J.R."/>
        </authorList>
    </citation>
    <scope>NUCLEOTIDE SEQUENCE [GENOMIC DNA] OF 18-65</scope>
</reference>
<feature type="signal peptide" evidence="2">
    <location>
        <begin position="1"/>
        <end position="20"/>
    </location>
</feature>
<feature type="peptide" id="PRO_0000006978" description="Beta-defensin 106A">
    <location>
        <begin position="21"/>
        <end position="65"/>
    </location>
</feature>
<feature type="disulfide bond" evidence="2">
    <location>
        <begin position="26"/>
        <end position="53"/>
    </location>
</feature>
<feature type="disulfide bond" evidence="1">
    <location>
        <begin position="33"/>
        <end position="47"/>
    </location>
</feature>
<feature type="disulfide bond" evidence="1">
    <location>
        <begin position="37"/>
        <end position="54"/>
    </location>
</feature>
<gene>
    <name type="primary">DEFB106A</name>
    <name type="synonym">DEFB106</name>
    <name type="synonym">DEFB6</name>
</gene>